<evidence type="ECO:0000255" key="1"/>
<evidence type="ECO:0000256" key="2">
    <source>
        <dbReference type="SAM" id="MobiDB-lite"/>
    </source>
</evidence>
<evidence type="ECO:0000305" key="3"/>
<organism>
    <name type="scientific">Treponema pallidum (strain Nichols)</name>
    <dbReference type="NCBI Taxonomy" id="243276"/>
    <lineage>
        <taxon>Bacteria</taxon>
        <taxon>Pseudomonadati</taxon>
        <taxon>Spirochaetota</taxon>
        <taxon>Spirochaetia</taxon>
        <taxon>Spirochaetales</taxon>
        <taxon>Treponemataceae</taxon>
        <taxon>Treponema</taxon>
    </lineage>
</organism>
<gene>
    <name type="ordered locus">TP_0136</name>
</gene>
<accession>O83172</accession>
<proteinExistence type="inferred from homology"/>
<sequence>MRRRVCTVVRAVVCLLSTSLLTTCDFTGIFAAIQSEVPIKTPSIPGAIYGLVKAGSKLYATNGRLWEKELNGTGSWQKVSSSSVPTDSDKKVMSIATDGNTFVLACVPGTGVYKHCVNGAGSSSTGTTASPSTETCSQHATLVGGTSKPFWLVPGGTGNNGNCGCGGGGGGSSSSSSSCIHIWLVPGGTGNNGNCGCGGGGGGSSSSSSSCIHIKVENTDEQFLDMGEGYVVTTKHLYTKNGSSSAGPAQCPGGGGGGGSSGGGGSSEYTKASCSFSTPILASVSDGCYHYILTKEKVYCRKQDTASSAASSPAQCPSSPSSSSSSSTNAGCEVAHGVDDPLCLAIFKHNGCEYLLIGGSRGYGEIKLEANSSGTNGTCMRLKESNVHKSPGQWGESSPTPKASAEQYRGTVGRFAVQKIYVVEKNGGGNGVAAGGAGCPANASSSSGGTSSTQRPDLYAAVGESSDTYTGLWKFDTTTCSWNRE</sequence>
<name>Y136_TREPA</name>
<dbReference type="EMBL" id="AE000520">
    <property type="protein sequence ID" value="AAC65137.1"/>
    <property type="status" value="ALT_INIT"/>
    <property type="molecule type" value="Genomic_DNA"/>
</dbReference>
<dbReference type="PIR" id="B71360">
    <property type="entry name" value="B71360"/>
</dbReference>
<dbReference type="RefSeq" id="WP_010881584.1">
    <property type="nucleotide sequence ID" value="NC_021490.2"/>
</dbReference>
<dbReference type="IntAct" id="O83172">
    <property type="interactions" value="3"/>
</dbReference>
<dbReference type="STRING" id="243276.TP_0136"/>
<dbReference type="EnsemblBacteria" id="AAC65137">
    <property type="protein sequence ID" value="AAC65137"/>
    <property type="gene ID" value="TP_0136"/>
</dbReference>
<dbReference type="KEGG" id="tpa:TP_0136"/>
<dbReference type="HOGENOM" id="CLU_056007_0_0_12"/>
<dbReference type="Proteomes" id="UP000000811">
    <property type="component" value="Chromosome"/>
</dbReference>
<dbReference type="GO" id="GO:0005886">
    <property type="term" value="C:plasma membrane"/>
    <property type="evidence" value="ECO:0007669"/>
    <property type="project" value="UniProtKB-SubCell"/>
</dbReference>
<comment type="subcellular location">
    <subcellularLocation>
        <location evidence="3">Cell membrane</location>
        <topology evidence="3">Lipid-anchor</topology>
    </subcellularLocation>
</comment>
<comment type="similarity">
    <text evidence="3">Belongs to the TP013X lipoprotein family.</text>
</comment>
<comment type="sequence caution" evidence="3">
    <conflict type="erroneous initiation">
        <sequence resource="EMBL-CDS" id="AAC65137"/>
    </conflict>
</comment>
<protein>
    <recommendedName>
        <fullName>Uncharacterized lipoprotein TP_0136</fullName>
    </recommendedName>
</protein>
<feature type="signal peptide" evidence="1">
    <location>
        <begin position="1"/>
        <end position="23"/>
    </location>
</feature>
<feature type="chain" id="PRO_0000018067" description="Uncharacterized lipoprotein TP_0136">
    <location>
        <begin position="24"/>
        <end position="485"/>
    </location>
</feature>
<feature type="region of interest" description="Disordered" evidence="2">
    <location>
        <begin position="308"/>
        <end position="331"/>
    </location>
</feature>
<feature type="compositionally biased region" description="Low complexity" evidence="2">
    <location>
        <begin position="308"/>
        <end position="327"/>
    </location>
</feature>
<feature type="lipid moiety-binding region" description="N-palmitoyl cysteine" evidence="1">
    <location>
        <position position="24"/>
    </location>
</feature>
<feature type="lipid moiety-binding region" description="S-diacylglycerol cysteine" evidence="1">
    <location>
        <position position="24"/>
    </location>
</feature>
<keyword id="KW-1003">Cell membrane</keyword>
<keyword id="KW-0449">Lipoprotein</keyword>
<keyword id="KW-0472">Membrane</keyword>
<keyword id="KW-0564">Palmitate</keyword>
<keyword id="KW-1185">Reference proteome</keyword>
<keyword id="KW-0732">Signal</keyword>
<reference key="1">
    <citation type="journal article" date="1998" name="Science">
        <title>Complete genome sequence of Treponema pallidum, the syphilis spirochete.</title>
        <authorList>
            <person name="Fraser C.M."/>
            <person name="Norris S.J."/>
            <person name="Weinstock G.M."/>
            <person name="White O."/>
            <person name="Sutton G.G."/>
            <person name="Dodson R.J."/>
            <person name="Gwinn M.L."/>
            <person name="Hickey E.K."/>
            <person name="Clayton R.A."/>
            <person name="Ketchum K.A."/>
            <person name="Sodergren E."/>
            <person name="Hardham J.M."/>
            <person name="McLeod M.P."/>
            <person name="Salzberg S.L."/>
            <person name="Peterson J.D."/>
            <person name="Khalak H.G."/>
            <person name="Richardson D.L."/>
            <person name="Howell J.K."/>
            <person name="Chidambaram M."/>
            <person name="Utterback T.R."/>
            <person name="McDonald L.A."/>
            <person name="Artiach P."/>
            <person name="Bowman C."/>
            <person name="Cotton M.D."/>
            <person name="Fujii C."/>
            <person name="Garland S.A."/>
            <person name="Hatch B."/>
            <person name="Horst K."/>
            <person name="Roberts K.M."/>
            <person name="Sandusky M."/>
            <person name="Weidman J.F."/>
            <person name="Smith H.O."/>
            <person name="Venter J.C."/>
        </authorList>
    </citation>
    <scope>NUCLEOTIDE SEQUENCE [LARGE SCALE GENOMIC DNA]</scope>
    <source>
        <strain>Nichols</strain>
    </source>
</reference>